<reference key="1">
    <citation type="submission" date="2007-08" db="EMBL/GenBank/DDBJ databases">
        <title>Complete sequence of Roseiflexus castenholzii DSM 13941.</title>
        <authorList>
            <consortium name="US DOE Joint Genome Institute"/>
            <person name="Copeland A."/>
            <person name="Lucas S."/>
            <person name="Lapidus A."/>
            <person name="Barry K."/>
            <person name="Glavina del Rio T."/>
            <person name="Dalin E."/>
            <person name="Tice H."/>
            <person name="Pitluck S."/>
            <person name="Thompson L.S."/>
            <person name="Brettin T."/>
            <person name="Bruce D."/>
            <person name="Detter J.C."/>
            <person name="Han C."/>
            <person name="Tapia R."/>
            <person name="Schmutz J."/>
            <person name="Larimer F."/>
            <person name="Land M."/>
            <person name="Hauser L."/>
            <person name="Kyrpides N."/>
            <person name="Mikhailova N."/>
            <person name="Bryant D.A."/>
            <person name="Hanada S."/>
            <person name="Tsukatani Y."/>
            <person name="Richardson P."/>
        </authorList>
    </citation>
    <scope>NUCLEOTIDE SEQUENCE [LARGE SCALE GENOMIC DNA]</scope>
    <source>
        <strain>DSM 13941 / HLO8</strain>
    </source>
</reference>
<dbReference type="EC" id="4.6.1.17" evidence="1"/>
<dbReference type="EMBL" id="CP000804">
    <property type="protein sequence ID" value="ABU59906.1"/>
    <property type="molecule type" value="Genomic_DNA"/>
</dbReference>
<dbReference type="RefSeq" id="WP_012122329.1">
    <property type="nucleotide sequence ID" value="NC_009767.1"/>
</dbReference>
<dbReference type="SMR" id="A7NQR0"/>
<dbReference type="STRING" id="383372.Rcas_3870"/>
<dbReference type="KEGG" id="rca:Rcas_3870"/>
<dbReference type="eggNOG" id="COG0315">
    <property type="taxonomic scope" value="Bacteria"/>
</dbReference>
<dbReference type="HOGENOM" id="CLU_074693_1_0_0"/>
<dbReference type="OrthoDB" id="9794429at2"/>
<dbReference type="UniPathway" id="UPA00344"/>
<dbReference type="Proteomes" id="UP000000263">
    <property type="component" value="Chromosome"/>
</dbReference>
<dbReference type="GO" id="GO:0061799">
    <property type="term" value="F:cyclic pyranopterin monophosphate synthase activity"/>
    <property type="evidence" value="ECO:0007669"/>
    <property type="project" value="UniProtKB-UniRule"/>
</dbReference>
<dbReference type="GO" id="GO:0006777">
    <property type="term" value="P:Mo-molybdopterin cofactor biosynthetic process"/>
    <property type="evidence" value="ECO:0007669"/>
    <property type="project" value="UniProtKB-UniRule"/>
</dbReference>
<dbReference type="CDD" id="cd01420">
    <property type="entry name" value="MoaC_PE"/>
    <property type="match status" value="1"/>
</dbReference>
<dbReference type="Gene3D" id="3.30.70.640">
    <property type="entry name" value="Molybdopterin cofactor biosynthesis C (MoaC) domain"/>
    <property type="match status" value="1"/>
</dbReference>
<dbReference type="HAMAP" id="MF_01224_B">
    <property type="entry name" value="MoaC_B"/>
    <property type="match status" value="1"/>
</dbReference>
<dbReference type="InterPro" id="IPR023045">
    <property type="entry name" value="MoaC"/>
</dbReference>
<dbReference type="InterPro" id="IPR047594">
    <property type="entry name" value="MoaC_bact/euk"/>
</dbReference>
<dbReference type="InterPro" id="IPR036522">
    <property type="entry name" value="MoaC_sf"/>
</dbReference>
<dbReference type="InterPro" id="IPR050105">
    <property type="entry name" value="MoCo_biosynth_MoaA/MoaC"/>
</dbReference>
<dbReference type="InterPro" id="IPR002820">
    <property type="entry name" value="Mopterin_CF_biosynth-C_dom"/>
</dbReference>
<dbReference type="NCBIfam" id="TIGR00581">
    <property type="entry name" value="moaC"/>
    <property type="match status" value="1"/>
</dbReference>
<dbReference type="NCBIfam" id="NF006870">
    <property type="entry name" value="PRK09364.1"/>
    <property type="match status" value="1"/>
</dbReference>
<dbReference type="PANTHER" id="PTHR22960:SF29">
    <property type="entry name" value="CYCLIC PYRANOPTERIN MONOPHOSPHATE SYNTHASE"/>
    <property type="match status" value="1"/>
</dbReference>
<dbReference type="PANTHER" id="PTHR22960">
    <property type="entry name" value="MOLYBDOPTERIN COFACTOR SYNTHESIS PROTEIN A"/>
    <property type="match status" value="1"/>
</dbReference>
<dbReference type="Pfam" id="PF01967">
    <property type="entry name" value="MoaC"/>
    <property type="match status" value="1"/>
</dbReference>
<dbReference type="SUPFAM" id="SSF55040">
    <property type="entry name" value="Molybdenum cofactor biosynthesis protein C, MoaC"/>
    <property type="match status" value="1"/>
</dbReference>
<gene>
    <name evidence="1" type="primary">moaC</name>
    <name type="ordered locus">Rcas_3870</name>
</gene>
<feature type="chain" id="PRO_1000085682" description="Cyclic pyranopterin monophosphate synthase">
    <location>
        <begin position="1"/>
        <end position="158"/>
    </location>
</feature>
<feature type="active site" evidence="1">
    <location>
        <position position="128"/>
    </location>
</feature>
<feature type="binding site" evidence="1">
    <location>
        <begin position="75"/>
        <end position="77"/>
    </location>
    <ligand>
        <name>substrate</name>
    </ligand>
</feature>
<feature type="binding site" evidence="1">
    <location>
        <begin position="113"/>
        <end position="114"/>
    </location>
    <ligand>
        <name>substrate</name>
    </ligand>
</feature>
<proteinExistence type="inferred from homology"/>
<sequence length="158" mass="16831">MSDLTHLDETGKARMVDVGAKDETLREAVVRGEVHMRPETLQRLAAGDMPKGDALATARIAGIMAAKRAPDLIPLCHPLLLTHVAVDVRLDAATSTVQIEATVRTVGKTGVEMEALTAVSVAALTVYDMCKAIDRTMQIGAIRLVRKSGGRSGEIVCE</sequence>
<protein>
    <recommendedName>
        <fullName evidence="1">Cyclic pyranopterin monophosphate synthase</fullName>
        <ecNumber evidence="1">4.6.1.17</ecNumber>
    </recommendedName>
    <alternativeName>
        <fullName evidence="1">Molybdenum cofactor biosynthesis protein C</fullName>
    </alternativeName>
</protein>
<evidence type="ECO:0000255" key="1">
    <source>
        <dbReference type="HAMAP-Rule" id="MF_01224"/>
    </source>
</evidence>
<keyword id="KW-0456">Lyase</keyword>
<keyword id="KW-0501">Molybdenum cofactor biosynthesis</keyword>
<keyword id="KW-1185">Reference proteome</keyword>
<organism>
    <name type="scientific">Roseiflexus castenholzii (strain DSM 13941 / HLO8)</name>
    <dbReference type="NCBI Taxonomy" id="383372"/>
    <lineage>
        <taxon>Bacteria</taxon>
        <taxon>Bacillati</taxon>
        <taxon>Chloroflexota</taxon>
        <taxon>Chloroflexia</taxon>
        <taxon>Chloroflexales</taxon>
        <taxon>Roseiflexineae</taxon>
        <taxon>Roseiflexaceae</taxon>
        <taxon>Roseiflexus</taxon>
    </lineage>
</organism>
<accession>A7NQR0</accession>
<comment type="function">
    <text evidence="1">Catalyzes the conversion of (8S)-3',8-cyclo-7,8-dihydroguanosine 5'-triphosphate to cyclic pyranopterin monophosphate (cPMP).</text>
</comment>
<comment type="catalytic activity">
    <reaction evidence="1">
        <text>(8S)-3',8-cyclo-7,8-dihydroguanosine 5'-triphosphate = cyclic pyranopterin phosphate + diphosphate</text>
        <dbReference type="Rhea" id="RHEA:49580"/>
        <dbReference type="ChEBI" id="CHEBI:33019"/>
        <dbReference type="ChEBI" id="CHEBI:59648"/>
        <dbReference type="ChEBI" id="CHEBI:131766"/>
        <dbReference type="EC" id="4.6.1.17"/>
    </reaction>
</comment>
<comment type="pathway">
    <text evidence="1">Cofactor biosynthesis; molybdopterin biosynthesis.</text>
</comment>
<comment type="subunit">
    <text evidence="1">Homohexamer; trimer of dimers.</text>
</comment>
<comment type="similarity">
    <text evidence="1">Belongs to the MoaC family.</text>
</comment>
<name>MOAC_ROSCS</name>